<feature type="chain" id="PRO_1000092760" description="ATP phosphoribosyltransferase">
    <location>
        <begin position="1"/>
        <end position="304"/>
    </location>
</feature>
<gene>
    <name evidence="1" type="primary">hisG</name>
    <name type="ordered locus">PXO_00832</name>
</gene>
<organism>
    <name type="scientific">Xanthomonas oryzae pv. oryzae (strain PXO99A)</name>
    <dbReference type="NCBI Taxonomy" id="360094"/>
    <lineage>
        <taxon>Bacteria</taxon>
        <taxon>Pseudomonadati</taxon>
        <taxon>Pseudomonadota</taxon>
        <taxon>Gammaproteobacteria</taxon>
        <taxon>Lysobacterales</taxon>
        <taxon>Lysobacteraceae</taxon>
        <taxon>Xanthomonas</taxon>
    </lineage>
</organism>
<keyword id="KW-0028">Amino-acid biosynthesis</keyword>
<keyword id="KW-0067">ATP-binding</keyword>
<keyword id="KW-0963">Cytoplasm</keyword>
<keyword id="KW-0328">Glycosyltransferase</keyword>
<keyword id="KW-0368">Histidine biosynthesis</keyword>
<keyword id="KW-0460">Magnesium</keyword>
<keyword id="KW-0479">Metal-binding</keyword>
<keyword id="KW-0547">Nucleotide-binding</keyword>
<keyword id="KW-0808">Transferase</keyword>
<protein>
    <recommendedName>
        <fullName evidence="1">ATP phosphoribosyltransferase</fullName>
        <shortName evidence="1">ATP-PRT</shortName>
        <shortName evidence="1">ATP-PRTase</shortName>
        <ecNumber evidence="1">2.4.2.17</ecNumber>
    </recommendedName>
</protein>
<name>HIS1_XANOP</name>
<comment type="function">
    <text evidence="1">Catalyzes the condensation of ATP and 5-phosphoribose 1-diphosphate to form N'-(5'-phosphoribosyl)-ATP (PR-ATP). Has a crucial role in the pathway because the rate of histidine biosynthesis seems to be controlled primarily by regulation of HisG enzymatic activity.</text>
</comment>
<comment type="catalytic activity">
    <reaction evidence="1">
        <text>1-(5-phospho-beta-D-ribosyl)-ATP + diphosphate = 5-phospho-alpha-D-ribose 1-diphosphate + ATP</text>
        <dbReference type="Rhea" id="RHEA:18473"/>
        <dbReference type="ChEBI" id="CHEBI:30616"/>
        <dbReference type="ChEBI" id="CHEBI:33019"/>
        <dbReference type="ChEBI" id="CHEBI:58017"/>
        <dbReference type="ChEBI" id="CHEBI:73183"/>
        <dbReference type="EC" id="2.4.2.17"/>
    </reaction>
</comment>
<comment type="cofactor">
    <cofactor evidence="1">
        <name>Mg(2+)</name>
        <dbReference type="ChEBI" id="CHEBI:18420"/>
    </cofactor>
</comment>
<comment type="activity regulation">
    <text evidence="1">Feedback inhibited by histidine.</text>
</comment>
<comment type="pathway">
    <text evidence="1">Amino-acid biosynthesis; L-histidine biosynthesis; L-histidine from 5-phospho-alpha-D-ribose 1-diphosphate: step 1/9.</text>
</comment>
<comment type="subcellular location">
    <subcellularLocation>
        <location evidence="1">Cytoplasm</location>
    </subcellularLocation>
</comment>
<comment type="similarity">
    <text evidence="1">Belongs to the ATP phosphoribosyltransferase family. Long subfamily.</text>
</comment>
<proteinExistence type="inferred from homology"/>
<reference key="1">
    <citation type="journal article" date="2008" name="BMC Genomics">
        <title>Genome sequence and rapid evolution of the rice pathogen Xanthomonas oryzae pv. oryzae PXO99A.</title>
        <authorList>
            <person name="Salzberg S.L."/>
            <person name="Sommer D.D."/>
            <person name="Schatz M.C."/>
            <person name="Phillippy A.M."/>
            <person name="Rabinowicz P.D."/>
            <person name="Tsuge S."/>
            <person name="Furutani A."/>
            <person name="Ochiai H."/>
            <person name="Delcher A.L."/>
            <person name="Kelley D."/>
            <person name="Madupu R."/>
            <person name="Puiu D."/>
            <person name="Radune D."/>
            <person name="Shumway M."/>
            <person name="Trapnell C."/>
            <person name="Aparna G."/>
            <person name="Jha G."/>
            <person name="Pandey A."/>
            <person name="Patil P.B."/>
            <person name="Ishihara H."/>
            <person name="Meyer D.F."/>
            <person name="Szurek B."/>
            <person name="Verdier V."/>
            <person name="Koebnik R."/>
            <person name="Dow J.M."/>
            <person name="Ryan R.P."/>
            <person name="Hirata H."/>
            <person name="Tsuyumu S."/>
            <person name="Won Lee S."/>
            <person name="Seo Y.-S."/>
            <person name="Sriariyanum M."/>
            <person name="Ronald P.C."/>
            <person name="Sonti R.V."/>
            <person name="Van Sluys M.-A."/>
            <person name="Leach J.E."/>
            <person name="White F.F."/>
            <person name="Bogdanove A.J."/>
        </authorList>
    </citation>
    <scope>NUCLEOTIDE SEQUENCE [LARGE SCALE GENOMIC DNA]</scope>
    <source>
        <strain>PXO99A</strain>
    </source>
</reference>
<dbReference type="EC" id="2.4.2.17" evidence="1"/>
<dbReference type="EMBL" id="CP000967">
    <property type="protein sequence ID" value="ACD58961.1"/>
    <property type="molecule type" value="Genomic_DNA"/>
</dbReference>
<dbReference type="RefSeq" id="WP_011258941.1">
    <property type="nucleotide sequence ID" value="NC_010717.2"/>
</dbReference>
<dbReference type="SMR" id="B2SKN9"/>
<dbReference type="KEGG" id="xop:PXO_00832"/>
<dbReference type="eggNOG" id="COG0040">
    <property type="taxonomic scope" value="Bacteria"/>
</dbReference>
<dbReference type="HOGENOM" id="CLU_038115_1_0_6"/>
<dbReference type="UniPathway" id="UPA00031">
    <property type="reaction ID" value="UER00006"/>
</dbReference>
<dbReference type="Proteomes" id="UP000001740">
    <property type="component" value="Chromosome"/>
</dbReference>
<dbReference type="GO" id="GO:0005737">
    <property type="term" value="C:cytoplasm"/>
    <property type="evidence" value="ECO:0007669"/>
    <property type="project" value="UniProtKB-SubCell"/>
</dbReference>
<dbReference type="GO" id="GO:0005524">
    <property type="term" value="F:ATP binding"/>
    <property type="evidence" value="ECO:0007669"/>
    <property type="project" value="UniProtKB-KW"/>
</dbReference>
<dbReference type="GO" id="GO:0003879">
    <property type="term" value="F:ATP phosphoribosyltransferase activity"/>
    <property type="evidence" value="ECO:0007669"/>
    <property type="project" value="UniProtKB-UniRule"/>
</dbReference>
<dbReference type="GO" id="GO:0000287">
    <property type="term" value="F:magnesium ion binding"/>
    <property type="evidence" value="ECO:0007669"/>
    <property type="project" value="UniProtKB-UniRule"/>
</dbReference>
<dbReference type="GO" id="GO:0000105">
    <property type="term" value="P:L-histidine biosynthetic process"/>
    <property type="evidence" value="ECO:0007669"/>
    <property type="project" value="UniProtKB-UniRule"/>
</dbReference>
<dbReference type="CDD" id="cd13592">
    <property type="entry name" value="PBP2_HisGL2"/>
    <property type="match status" value="1"/>
</dbReference>
<dbReference type="FunFam" id="3.40.190.10:FF:000008">
    <property type="entry name" value="ATP phosphoribosyltransferase"/>
    <property type="match status" value="1"/>
</dbReference>
<dbReference type="Gene3D" id="3.30.70.120">
    <property type="match status" value="1"/>
</dbReference>
<dbReference type="Gene3D" id="3.40.190.10">
    <property type="entry name" value="Periplasmic binding protein-like II"/>
    <property type="match status" value="2"/>
</dbReference>
<dbReference type="HAMAP" id="MF_00079">
    <property type="entry name" value="HisG_Long"/>
    <property type="match status" value="1"/>
</dbReference>
<dbReference type="InterPro" id="IPR020621">
    <property type="entry name" value="ATP-PRT_HisG_long"/>
</dbReference>
<dbReference type="InterPro" id="IPR013820">
    <property type="entry name" value="ATP_PRibTrfase_cat"/>
</dbReference>
<dbReference type="InterPro" id="IPR018198">
    <property type="entry name" value="ATP_PRibTrfase_CS"/>
</dbReference>
<dbReference type="InterPro" id="IPR001348">
    <property type="entry name" value="ATP_PRibTrfase_HisG"/>
</dbReference>
<dbReference type="InterPro" id="IPR013115">
    <property type="entry name" value="HisG_C"/>
</dbReference>
<dbReference type="InterPro" id="IPR015867">
    <property type="entry name" value="N-reg_PII/ATP_PRibTrfase_C"/>
</dbReference>
<dbReference type="NCBIfam" id="TIGR00070">
    <property type="entry name" value="hisG"/>
    <property type="match status" value="1"/>
</dbReference>
<dbReference type="NCBIfam" id="TIGR03455">
    <property type="entry name" value="HisG_C-term"/>
    <property type="match status" value="1"/>
</dbReference>
<dbReference type="PANTHER" id="PTHR21403:SF8">
    <property type="entry name" value="ATP PHOSPHORIBOSYLTRANSFERASE"/>
    <property type="match status" value="1"/>
</dbReference>
<dbReference type="PANTHER" id="PTHR21403">
    <property type="entry name" value="ATP PHOSPHORIBOSYLTRANSFERASE ATP-PRTASE"/>
    <property type="match status" value="1"/>
</dbReference>
<dbReference type="Pfam" id="PF01634">
    <property type="entry name" value="HisG"/>
    <property type="match status" value="1"/>
</dbReference>
<dbReference type="Pfam" id="PF08029">
    <property type="entry name" value="HisG_C"/>
    <property type="match status" value="1"/>
</dbReference>
<dbReference type="SUPFAM" id="SSF53850">
    <property type="entry name" value="Periplasmic binding protein-like II"/>
    <property type="match status" value="1"/>
</dbReference>
<dbReference type="PROSITE" id="PS01316">
    <property type="entry name" value="ATP_P_PHORIBOSYLTR"/>
    <property type="match status" value="1"/>
</dbReference>
<accession>B2SKN9</accession>
<evidence type="ECO:0000255" key="1">
    <source>
        <dbReference type="HAMAP-Rule" id="MF_00079"/>
    </source>
</evidence>
<sequence>MSASTAAPARDRLRIAIQKSGRLAEPARSLLAACGLSWRQSRDKLFCYGESLPVDLLLVRDDDIPGLIADGVCDLGIVGQNELEEQAAERRGNGLPAAYHAVRGVGFGQCRLMLAVPEEWDWQGVAQLAGKRIATSYPAILADWLERQGIEATVVELSGSVEIAPRLGTADLICDLVSSGATLAANQLKPVELVMESEAVLAGAVREPADARAGLLAMLLRRMDGVLKLRDSKLLMFRADQDNVDALRRLLPDADPLVQLPDDGNGVLRLQTMCHGAVTWQRLEELERAGAQGLMVLTVERSLA</sequence>